<dbReference type="EMBL" id="U00039">
    <property type="protein sequence ID" value="AAB18515.1"/>
    <property type="status" value="ALT_INIT"/>
    <property type="molecule type" value="Genomic_DNA"/>
</dbReference>
<dbReference type="EMBL" id="U00096">
    <property type="protein sequence ID" value="AAC76562.2"/>
    <property type="molecule type" value="Genomic_DNA"/>
</dbReference>
<dbReference type="EMBL" id="AP009048">
    <property type="protein sequence ID" value="BAE77758.1"/>
    <property type="molecule type" value="Genomic_DNA"/>
</dbReference>
<dbReference type="PIR" id="S47759">
    <property type="entry name" value="S47759"/>
</dbReference>
<dbReference type="RefSeq" id="NP_417994.2">
    <property type="nucleotide sequence ID" value="NC_000913.3"/>
</dbReference>
<dbReference type="RefSeq" id="WP_000988308.1">
    <property type="nucleotide sequence ID" value="NZ_STEB01000018.1"/>
</dbReference>
<dbReference type="PDB" id="9FNN">
    <property type="method" value="EM"/>
    <property type="resolution" value="2.85 A"/>
    <property type="chains" value="F/S=1-63"/>
</dbReference>
<dbReference type="PDB" id="9FO7">
    <property type="method" value="EM"/>
    <property type="resolution" value="2.85 A"/>
    <property type="chains" value="F/S=1-63"/>
</dbReference>
<dbReference type="PDB" id="9FP0">
    <property type="method" value="EM"/>
    <property type="resolution" value="3.37 A"/>
    <property type="chains" value="F/S=1-63"/>
</dbReference>
<dbReference type="PDB" id="9FP2">
    <property type="method" value="EM"/>
    <property type="resolution" value="3.76 A"/>
    <property type="chains" value="F/S=1-63"/>
</dbReference>
<dbReference type="PDBsum" id="9FNN"/>
<dbReference type="PDBsum" id="9FO7"/>
<dbReference type="PDBsum" id="9FP0"/>
<dbReference type="PDBsum" id="9FP2"/>
<dbReference type="SMR" id="P0ADJ5"/>
<dbReference type="BioGRID" id="4260851">
    <property type="interactions" value="219"/>
</dbReference>
<dbReference type="FunCoup" id="P0ADJ5">
    <property type="interactions" value="3"/>
</dbReference>
<dbReference type="IntAct" id="P0ADJ5">
    <property type="interactions" value="2"/>
</dbReference>
<dbReference type="STRING" id="511145.b3537"/>
<dbReference type="PaxDb" id="511145-b3537"/>
<dbReference type="EnsemblBacteria" id="AAC76562">
    <property type="protein sequence ID" value="AAC76562"/>
    <property type="gene ID" value="b3537"/>
</dbReference>
<dbReference type="GeneID" id="93778259"/>
<dbReference type="GeneID" id="948059"/>
<dbReference type="KEGG" id="ecj:JW5663"/>
<dbReference type="KEGG" id="eco:b3537"/>
<dbReference type="KEGG" id="ecoc:C3026_19160"/>
<dbReference type="PATRIC" id="fig|511145.12.peg.3648"/>
<dbReference type="EchoBASE" id="EB2173"/>
<dbReference type="eggNOG" id="ENOG5032ZX1">
    <property type="taxonomic scope" value="Bacteria"/>
</dbReference>
<dbReference type="HOGENOM" id="CLU_198346_0_0_6"/>
<dbReference type="InParanoid" id="P0ADJ5"/>
<dbReference type="OMA" id="GYYARHS"/>
<dbReference type="OrthoDB" id="6469731at2"/>
<dbReference type="BioCyc" id="EcoCyc:EG12264-MONOMER"/>
<dbReference type="PRO" id="PR:P0ADJ5"/>
<dbReference type="Proteomes" id="UP000000625">
    <property type="component" value="Chromosome"/>
</dbReference>
<dbReference type="GO" id="GO:0005886">
    <property type="term" value="C:plasma membrane"/>
    <property type="evidence" value="ECO:0007669"/>
    <property type="project" value="UniProtKB-SubCell"/>
</dbReference>
<dbReference type="GO" id="GO:0030244">
    <property type="term" value="P:cellulose biosynthetic process"/>
    <property type="evidence" value="ECO:0007669"/>
    <property type="project" value="UniProtKB-KW"/>
</dbReference>
<dbReference type="InterPro" id="IPR019995">
    <property type="entry name" value="Cellulose_BcsF/YhjT"/>
</dbReference>
<dbReference type="NCBIfam" id="TIGR03493">
    <property type="entry name" value="cellullose_BcsF"/>
    <property type="match status" value="1"/>
</dbReference>
<dbReference type="Pfam" id="PF11120">
    <property type="entry name" value="CBP_BcsF"/>
    <property type="match status" value="1"/>
</dbReference>
<protein>
    <recommendedName>
        <fullName>Cellulose biosynthesis protein BcsF</fullName>
    </recommendedName>
</protein>
<accession>P0ADJ5</accession>
<accession>P37658</accession>
<accession>Q2M7J8</accession>
<evidence type="ECO:0000255" key="1"/>
<evidence type="ECO:0000269" key="2">
    <source>
    </source>
</evidence>
<evidence type="ECO:0000305" key="3"/>
<evidence type="ECO:0000305" key="4">
    <source>
    </source>
</evidence>
<evidence type="ECO:0007829" key="5">
    <source>
        <dbReference type="PDB" id="9FNN"/>
    </source>
</evidence>
<organism>
    <name type="scientific">Escherichia coli (strain K12)</name>
    <dbReference type="NCBI Taxonomy" id="83333"/>
    <lineage>
        <taxon>Bacteria</taxon>
        <taxon>Pseudomonadati</taxon>
        <taxon>Pseudomonadota</taxon>
        <taxon>Gammaproteobacteria</taxon>
        <taxon>Enterobacterales</taxon>
        <taxon>Enterobacteriaceae</taxon>
        <taxon>Escherichia</taxon>
    </lineage>
</organism>
<reference key="1">
    <citation type="journal article" date="1994" name="Nucleic Acids Res.">
        <title>Analysis of the Escherichia coli genome. V. DNA sequence of the region from 76.0 to 81.5 minutes.</title>
        <authorList>
            <person name="Sofia H.J."/>
            <person name="Burland V."/>
            <person name="Daniels D.L."/>
            <person name="Plunkett G. III"/>
            <person name="Blattner F.R."/>
        </authorList>
    </citation>
    <scope>NUCLEOTIDE SEQUENCE [LARGE SCALE GENOMIC DNA]</scope>
    <source>
        <strain>K12 / MG1655 / ATCC 47076</strain>
    </source>
</reference>
<reference key="2">
    <citation type="journal article" date="1997" name="Science">
        <title>The complete genome sequence of Escherichia coli K-12.</title>
        <authorList>
            <person name="Blattner F.R."/>
            <person name="Plunkett G. III"/>
            <person name="Bloch C.A."/>
            <person name="Perna N.T."/>
            <person name="Burland V."/>
            <person name="Riley M."/>
            <person name="Collado-Vides J."/>
            <person name="Glasner J.D."/>
            <person name="Rode C.K."/>
            <person name="Mayhew G.F."/>
            <person name="Gregor J."/>
            <person name="Davis N.W."/>
            <person name="Kirkpatrick H.A."/>
            <person name="Goeden M.A."/>
            <person name="Rose D.J."/>
            <person name="Mau B."/>
            <person name="Shao Y."/>
        </authorList>
    </citation>
    <scope>NUCLEOTIDE SEQUENCE [LARGE SCALE GENOMIC DNA]</scope>
    <source>
        <strain>K12 / MG1655 / ATCC 47076</strain>
    </source>
</reference>
<reference key="3">
    <citation type="journal article" date="2006" name="Mol. Syst. Biol.">
        <title>Highly accurate genome sequences of Escherichia coli K-12 strains MG1655 and W3110.</title>
        <authorList>
            <person name="Hayashi K."/>
            <person name="Morooka N."/>
            <person name="Yamamoto Y."/>
            <person name="Fujita K."/>
            <person name="Isono K."/>
            <person name="Choi S."/>
            <person name="Ohtsubo E."/>
            <person name="Baba T."/>
            <person name="Wanner B.L."/>
            <person name="Mori H."/>
            <person name="Horiuchi T."/>
        </authorList>
    </citation>
    <scope>NUCLEOTIDE SEQUENCE [LARGE SCALE GENOMIC DNA]</scope>
    <source>
        <strain>K12 / W3110 / ATCC 27325 / DSM 5911</strain>
    </source>
</reference>
<reference key="4">
    <citation type="journal article" date="2013" name="J. Bacteriol.">
        <title>Cellulose as an architectural element in spatially structured Escherichia coli biofilms.</title>
        <authorList>
            <person name="Serra D.O."/>
            <person name="Richter A.M."/>
            <person name="Hengge R."/>
        </authorList>
    </citation>
    <scope>DISRUPTION PHENOTYPE</scope>
    <source>
        <strain>K12 / W3110 / AR3110</strain>
    </source>
</reference>
<comment type="subcellular location">
    <subcellularLocation>
        <location evidence="3">Cell inner membrane</location>
        <topology evidence="3">Single-pass membrane protein</topology>
    </subcellularLocation>
</comment>
<comment type="disruption phenotype">
    <text evidence="2">When the bcsEFG operon is disrupted in a cellulose-synthesizing strain (a strain K12 / W3110 derivative called AR3110 with a restored, functional bcsQ gene), cellulose is no longer made.</text>
</comment>
<comment type="miscellaneous">
    <text evidence="4">Cellulose production is abolished in E.coli K12 / MG1655 and W3110 due to a premature stop codon in bcsQ (PubMed:24097954).</text>
</comment>
<comment type="similarity">
    <text evidence="3">Belongs to the BcsF family.</text>
</comment>
<comment type="sequence caution" evidence="3">
    <conflict type="erroneous initiation">
        <sequence resource="EMBL-CDS" id="AAB18515"/>
    </conflict>
    <text>Truncated N-terminus.</text>
</comment>
<gene>
    <name type="primary">bcsF</name>
    <name type="synonym">yhjT</name>
    <name type="ordered locus">b3537</name>
    <name type="ordered locus">JW5663</name>
</gene>
<sequence length="63" mass="7364">MMTISDIIEIIVVCALIFFPLGYLARHSLRRIRDTLRLFFAKPRYVKPAGTLRRTEKARATKK</sequence>
<proteinExistence type="evidence at protein level"/>
<name>BCSF_ECOLI</name>
<keyword id="KW-0002">3D-structure</keyword>
<keyword id="KW-0997">Cell inner membrane</keyword>
<keyword id="KW-1003">Cell membrane</keyword>
<keyword id="KW-0135">Cellulose biosynthesis</keyword>
<keyword id="KW-0472">Membrane</keyword>
<keyword id="KW-1185">Reference proteome</keyword>
<keyword id="KW-0812">Transmembrane</keyword>
<keyword id="KW-1133">Transmembrane helix</keyword>
<feature type="chain" id="PRO_0000169581" description="Cellulose biosynthesis protein BcsF">
    <location>
        <begin position="1"/>
        <end position="63"/>
    </location>
</feature>
<feature type="transmembrane region" description="Helical" evidence="1">
    <location>
        <begin position="4"/>
        <end position="24"/>
    </location>
</feature>
<feature type="helix" evidence="5">
    <location>
        <begin position="8"/>
        <end position="27"/>
    </location>
</feature>
<feature type="helix" evidence="5">
    <location>
        <begin position="29"/>
        <end position="40"/>
    </location>
</feature>
<feature type="strand" evidence="5">
    <location>
        <begin position="47"/>
        <end position="52"/>
    </location>
</feature>